<organism>
    <name type="scientific">Methanothermus sociabilis</name>
    <dbReference type="NCBI Taxonomy" id="2181"/>
    <lineage>
        <taxon>Archaea</taxon>
        <taxon>Methanobacteriati</taxon>
        <taxon>Methanobacteriota</taxon>
        <taxon>Methanomada group</taxon>
        <taxon>Methanobacteria</taxon>
        <taxon>Methanobacteriales</taxon>
        <taxon>Methanothermaceae</taxon>
        <taxon>Methanothermus</taxon>
    </lineage>
</organism>
<keyword id="KW-0350">Heme biosynthesis</keyword>
<keyword id="KW-0456">Lyase</keyword>
<keyword id="KW-0460">Magnesium</keyword>
<keyword id="KW-0479">Metal-binding</keyword>
<keyword id="KW-0627">Porphyrin biosynthesis</keyword>
<keyword id="KW-0862">Zinc</keyword>
<feature type="chain" id="PRO_0000140524" description="Delta-aminolevulinic acid dehydratase">
    <location>
        <begin position="1"/>
        <end position="320"/>
    </location>
</feature>
<feature type="active site" description="Schiff-base intermediate with substrate" evidence="1">
    <location>
        <position position="194"/>
    </location>
</feature>
<feature type="active site" description="Schiff-base intermediate with substrate" evidence="1">
    <location>
        <position position="247"/>
    </location>
</feature>
<feature type="binding site" evidence="1">
    <location>
        <position position="119"/>
    </location>
    <ligand>
        <name>Zn(2+)</name>
        <dbReference type="ChEBI" id="CHEBI:29105"/>
        <note>catalytic</note>
    </ligand>
</feature>
<feature type="binding site" evidence="1">
    <location>
        <position position="121"/>
    </location>
    <ligand>
        <name>Zn(2+)</name>
        <dbReference type="ChEBI" id="CHEBI:29105"/>
        <note>catalytic</note>
    </ligand>
</feature>
<feature type="binding site" evidence="1">
    <location>
        <position position="129"/>
    </location>
    <ligand>
        <name>Zn(2+)</name>
        <dbReference type="ChEBI" id="CHEBI:29105"/>
        <note>catalytic</note>
    </ligand>
</feature>
<feature type="binding site" evidence="1">
    <location>
        <position position="204"/>
    </location>
    <ligand>
        <name>5-aminolevulinate</name>
        <dbReference type="ChEBI" id="CHEBI:356416"/>
        <label>1</label>
    </ligand>
</feature>
<feature type="binding site" evidence="1">
    <location>
        <position position="216"/>
    </location>
    <ligand>
        <name>5-aminolevulinate</name>
        <dbReference type="ChEBI" id="CHEBI:356416"/>
        <label>1</label>
    </ligand>
</feature>
<feature type="binding site" evidence="1">
    <location>
        <position position="232"/>
    </location>
    <ligand>
        <name>Mg(2+)</name>
        <dbReference type="ChEBI" id="CHEBI:18420"/>
    </ligand>
</feature>
<feature type="binding site" evidence="1">
    <location>
        <position position="273"/>
    </location>
    <ligand>
        <name>5-aminolevulinate</name>
        <dbReference type="ChEBI" id="CHEBI:356416"/>
        <label>2</label>
    </ligand>
</feature>
<proteinExistence type="inferred from homology"/>
<protein>
    <recommendedName>
        <fullName>Delta-aminolevulinic acid dehydratase</fullName>
        <shortName>ALAD</shortName>
        <shortName>ALADH</shortName>
        <ecNumber>4.2.1.24</ecNumber>
    </recommendedName>
    <alternativeName>
        <fullName>Porphobilinogen synthase</fullName>
    </alternativeName>
</protein>
<sequence>MKFPYTRMRRLRKNSKIRSLVKETTLSKDDLIYPVFVKEGIKTKEKIPKMPGQYRYSVDELIDEAKKLEEKGLKAILVFGIPKKKDKYGSSAYDPNGIVQKSVKLLKEETDLVVITDVCLCQYTEHGHCGIVKNKKIVNDETLKYLSKVALSHAEAGADVVAPSDMMDGRVKAIREELEKNGFDDVIIMSYSAKYASSFYEPFRSAVYSSPAFGDRSTYQMDPPNSLEALREVKLDIDEGADIVMVKPALPYLDIIRLVKDTFGVPTAAYNVSGEYSMIKAAIDANYLSNKVIIETLLSIKRAGADLIITHFAPEIVEEI</sequence>
<comment type="function">
    <text evidence="1">Catalyzes an early step in the biosynthesis of tetrapyrroles. Binds two molecules of 5-aminolevulinate per subunit, each at a distinct site, and catalyzes their condensation to form porphobilinogen (By similarity).</text>
</comment>
<comment type="catalytic activity">
    <reaction>
        <text>2 5-aminolevulinate = porphobilinogen + 2 H2O + H(+)</text>
        <dbReference type="Rhea" id="RHEA:24064"/>
        <dbReference type="ChEBI" id="CHEBI:15377"/>
        <dbReference type="ChEBI" id="CHEBI:15378"/>
        <dbReference type="ChEBI" id="CHEBI:58126"/>
        <dbReference type="ChEBI" id="CHEBI:356416"/>
        <dbReference type="EC" id="4.2.1.24"/>
    </reaction>
</comment>
<comment type="cofactor">
    <cofactor evidence="1">
        <name>Zn(2+)</name>
        <dbReference type="ChEBI" id="CHEBI:29105"/>
    </cofactor>
    <text evidence="1">Binds 1 zinc ion per monomer.</text>
</comment>
<comment type="pathway">
    <text>Porphyrin-containing compound metabolism; protoporphyrin-IX biosynthesis; coproporphyrinogen-III from 5-aminolevulinate: step 1/4.</text>
</comment>
<comment type="subunit">
    <text evidence="1">Homooctamer.</text>
</comment>
<comment type="similarity">
    <text evidence="2">Belongs to the ALAD family.</text>
</comment>
<accession>Q02250</accession>
<evidence type="ECO:0000250" key="1"/>
<evidence type="ECO:0000305" key="2"/>
<name>HEM2_METSC</name>
<reference key="1">
    <citation type="journal article" date="1992" name="Gene">
        <title>Sequence of the 5-aminolevulinic acid dehydratase-encoding gene from the hyperthermophilic methanogen, Methanothermus sociabilis.</title>
        <authorList>
            <person name="Broeckl G."/>
            <person name="Berchtold M."/>
            <person name="Behr M."/>
            <person name="Koenig H."/>
        </authorList>
    </citation>
    <scope>NUCLEOTIDE SEQUENCE [GENOMIC DNA]</scope>
</reference>
<gene>
    <name type="primary">hemB</name>
    <name type="synonym">alaDH</name>
</gene>
<dbReference type="EC" id="4.2.1.24"/>
<dbReference type="EMBL" id="M90083">
    <property type="protein sequence ID" value="AAA73226.1"/>
    <property type="molecule type" value="Genomic_DNA"/>
</dbReference>
<dbReference type="PIR" id="JC1286">
    <property type="entry name" value="JC1286"/>
</dbReference>
<dbReference type="SMR" id="Q02250"/>
<dbReference type="UniPathway" id="UPA00251">
    <property type="reaction ID" value="UER00318"/>
</dbReference>
<dbReference type="GO" id="GO:0005829">
    <property type="term" value="C:cytosol"/>
    <property type="evidence" value="ECO:0007669"/>
    <property type="project" value="TreeGrafter"/>
</dbReference>
<dbReference type="GO" id="GO:0004655">
    <property type="term" value="F:porphobilinogen synthase activity"/>
    <property type="evidence" value="ECO:0007669"/>
    <property type="project" value="UniProtKB-EC"/>
</dbReference>
<dbReference type="GO" id="GO:0008270">
    <property type="term" value="F:zinc ion binding"/>
    <property type="evidence" value="ECO:0007669"/>
    <property type="project" value="TreeGrafter"/>
</dbReference>
<dbReference type="GO" id="GO:0006782">
    <property type="term" value="P:protoporphyrinogen IX biosynthetic process"/>
    <property type="evidence" value="ECO:0007669"/>
    <property type="project" value="UniProtKB-UniPathway"/>
</dbReference>
<dbReference type="CDD" id="cd00384">
    <property type="entry name" value="ALAD_PBGS"/>
    <property type="match status" value="1"/>
</dbReference>
<dbReference type="FunFam" id="3.20.20.70:FF:000019">
    <property type="entry name" value="Delta-aminolevulinic acid dehydratase"/>
    <property type="match status" value="1"/>
</dbReference>
<dbReference type="Gene3D" id="3.20.20.70">
    <property type="entry name" value="Aldolase class I"/>
    <property type="match status" value="1"/>
</dbReference>
<dbReference type="InterPro" id="IPR001731">
    <property type="entry name" value="ALAD"/>
</dbReference>
<dbReference type="InterPro" id="IPR030656">
    <property type="entry name" value="ALAD_AS"/>
</dbReference>
<dbReference type="InterPro" id="IPR013785">
    <property type="entry name" value="Aldolase_TIM"/>
</dbReference>
<dbReference type="NCBIfam" id="NF006762">
    <property type="entry name" value="PRK09283.1"/>
    <property type="match status" value="1"/>
</dbReference>
<dbReference type="PANTHER" id="PTHR11458">
    <property type="entry name" value="DELTA-AMINOLEVULINIC ACID DEHYDRATASE"/>
    <property type="match status" value="1"/>
</dbReference>
<dbReference type="PANTHER" id="PTHR11458:SF0">
    <property type="entry name" value="DELTA-AMINOLEVULINIC ACID DEHYDRATASE"/>
    <property type="match status" value="1"/>
</dbReference>
<dbReference type="Pfam" id="PF00490">
    <property type="entry name" value="ALAD"/>
    <property type="match status" value="1"/>
</dbReference>
<dbReference type="PIRSF" id="PIRSF001415">
    <property type="entry name" value="Porphbilin_synth"/>
    <property type="match status" value="1"/>
</dbReference>
<dbReference type="PRINTS" id="PR00144">
    <property type="entry name" value="DALDHYDRTASE"/>
</dbReference>
<dbReference type="SMART" id="SM01004">
    <property type="entry name" value="ALAD"/>
    <property type="match status" value="1"/>
</dbReference>
<dbReference type="SUPFAM" id="SSF51569">
    <property type="entry name" value="Aldolase"/>
    <property type="match status" value="1"/>
</dbReference>
<dbReference type="PROSITE" id="PS00169">
    <property type="entry name" value="D_ALA_DEHYDRATASE"/>
    <property type="match status" value="1"/>
</dbReference>